<organism>
    <name type="scientific">Streptococcus pneumoniae (strain ATCC BAA-255 / R6)</name>
    <dbReference type="NCBI Taxonomy" id="171101"/>
    <lineage>
        <taxon>Bacteria</taxon>
        <taxon>Bacillati</taxon>
        <taxon>Bacillota</taxon>
        <taxon>Bacilli</taxon>
        <taxon>Lactobacillales</taxon>
        <taxon>Streptococcaceae</taxon>
        <taxon>Streptococcus</taxon>
    </lineage>
</organism>
<gene>
    <name type="ordered locus">spr1327</name>
</gene>
<feature type="chain" id="PRO_0000095001" description="UPF0291 protein spr1327">
    <location>
        <begin position="1"/>
        <end position="85"/>
    </location>
</feature>
<feature type="region of interest" description="Disordered" evidence="2">
    <location>
        <begin position="62"/>
        <end position="85"/>
    </location>
</feature>
<sequence length="85" mass="9873">MDPKKIARINELAKKKKTEGLTPEEKVEQAKLREEYIEGYRRAVRHHIEGIKIVDEEGNDVTPEKLRQVQREKGLHGRSLDDPNS</sequence>
<name>Y1327_STRR6</name>
<evidence type="ECO:0000255" key="1">
    <source>
        <dbReference type="HAMAP-Rule" id="MF_01103"/>
    </source>
</evidence>
<evidence type="ECO:0000256" key="2">
    <source>
        <dbReference type="SAM" id="MobiDB-lite"/>
    </source>
</evidence>
<protein>
    <recommendedName>
        <fullName evidence="1">UPF0291 protein spr1327</fullName>
    </recommendedName>
</protein>
<keyword id="KW-0963">Cytoplasm</keyword>
<keyword id="KW-1185">Reference proteome</keyword>
<comment type="subcellular location">
    <subcellularLocation>
        <location evidence="1">Cytoplasm</location>
    </subcellularLocation>
</comment>
<comment type="similarity">
    <text evidence="1">Belongs to the UPF0291 family.</text>
</comment>
<dbReference type="EMBL" id="AE007317">
    <property type="protein sequence ID" value="AAL00131.1"/>
    <property type="molecule type" value="Genomic_DNA"/>
</dbReference>
<dbReference type="PIR" id="F98037">
    <property type="entry name" value="F98037"/>
</dbReference>
<dbReference type="RefSeq" id="NP_358920.1">
    <property type="nucleotide sequence ID" value="NC_003098.1"/>
</dbReference>
<dbReference type="RefSeq" id="WP_000371287.1">
    <property type="nucleotide sequence ID" value="NC_003098.1"/>
</dbReference>
<dbReference type="SMR" id="Q8DP67"/>
<dbReference type="STRING" id="171101.spr1327"/>
<dbReference type="KEGG" id="spr:spr1327"/>
<dbReference type="PATRIC" id="fig|171101.6.peg.1439"/>
<dbReference type="eggNOG" id="COG4224">
    <property type="taxonomic scope" value="Bacteria"/>
</dbReference>
<dbReference type="HOGENOM" id="CLU_173137_0_2_9"/>
<dbReference type="PHI-base" id="PHI:3151"/>
<dbReference type="Proteomes" id="UP000000586">
    <property type="component" value="Chromosome"/>
</dbReference>
<dbReference type="GO" id="GO:0005737">
    <property type="term" value="C:cytoplasm"/>
    <property type="evidence" value="ECO:0007669"/>
    <property type="project" value="UniProtKB-SubCell"/>
</dbReference>
<dbReference type="Gene3D" id="1.10.287.540">
    <property type="entry name" value="Helix hairpin bin"/>
    <property type="match status" value="1"/>
</dbReference>
<dbReference type="HAMAP" id="MF_01103">
    <property type="entry name" value="UPF0291"/>
    <property type="match status" value="1"/>
</dbReference>
<dbReference type="InterPro" id="IPR009242">
    <property type="entry name" value="DUF896"/>
</dbReference>
<dbReference type="NCBIfam" id="NF002711">
    <property type="entry name" value="PRK02539.1"/>
    <property type="match status" value="1"/>
</dbReference>
<dbReference type="PANTHER" id="PTHR37300">
    <property type="entry name" value="UPF0291 PROTEIN CBO2609/CLC_2481"/>
    <property type="match status" value="1"/>
</dbReference>
<dbReference type="PANTHER" id="PTHR37300:SF1">
    <property type="entry name" value="UPF0291 PROTEIN YNZC"/>
    <property type="match status" value="1"/>
</dbReference>
<dbReference type="Pfam" id="PF05979">
    <property type="entry name" value="DUF896"/>
    <property type="match status" value="1"/>
</dbReference>
<dbReference type="SUPFAM" id="SSF158221">
    <property type="entry name" value="YnzC-like"/>
    <property type="match status" value="1"/>
</dbReference>
<reference key="1">
    <citation type="journal article" date="2001" name="J. Bacteriol.">
        <title>Genome of the bacterium Streptococcus pneumoniae strain R6.</title>
        <authorList>
            <person name="Hoskins J."/>
            <person name="Alborn W.E. Jr."/>
            <person name="Arnold J."/>
            <person name="Blaszczak L.C."/>
            <person name="Burgett S."/>
            <person name="DeHoff B.S."/>
            <person name="Estrem S.T."/>
            <person name="Fritz L."/>
            <person name="Fu D.-J."/>
            <person name="Fuller W."/>
            <person name="Geringer C."/>
            <person name="Gilmour R."/>
            <person name="Glass J.S."/>
            <person name="Khoja H."/>
            <person name="Kraft A.R."/>
            <person name="Lagace R.E."/>
            <person name="LeBlanc D.J."/>
            <person name="Lee L.N."/>
            <person name="Lefkowitz E.J."/>
            <person name="Lu J."/>
            <person name="Matsushima P."/>
            <person name="McAhren S.M."/>
            <person name="McHenney M."/>
            <person name="McLeaster K."/>
            <person name="Mundy C.W."/>
            <person name="Nicas T.I."/>
            <person name="Norris F.H."/>
            <person name="O'Gara M."/>
            <person name="Peery R.B."/>
            <person name="Robertson G.T."/>
            <person name="Rockey P."/>
            <person name="Sun P.-M."/>
            <person name="Winkler M.E."/>
            <person name="Yang Y."/>
            <person name="Young-Bellido M."/>
            <person name="Zhao G."/>
            <person name="Zook C.A."/>
            <person name="Baltz R.H."/>
            <person name="Jaskunas S.R."/>
            <person name="Rosteck P.R. Jr."/>
            <person name="Skatrud P.L."/>
            <person name="Glass J.I."/>
        </authorList>
    </citation>
    <scope>NUCLEOTIDE SEQUENCE [LARGE SCALE GENOMIC DNA]</scope>
    <source>
        <strain>ATCC BAA-255 / R6</strain>
    </source>
</reference>
<accession>Q8DP67</accession>
<proteinExistence type="inferred from homology"/>